<protein>
    <recommendedName>
        <fullName evidence="1">Ribose-5-phosphate isomerase A</fullName>
        <ecNumber evidence="1">5.3.1.6</ecNumber>
    </recommendedName>
    <alternativeName>
        <fullName evidence="1">Phosphoriboisomerase A</fullName>
        <shortName evidence="1">PRI</shortName>
    </alternativeName>
</protein>
<evidence type="ECO:0000255" key="1">
    <source>
        <dbReference type="HAMAP-Rule" id="MF_00170"/>
    </source>
</evidence>
<sequence>MTQDEMKQAVARAAIDYVVAGEIIGVGTGSTANFFIDELGKIKDRIKGAVASSEATAERLRAHGITIFDLNDIDSMSVYIDGADEITAQGAMIKGGGAALTREKIVASVAKKFVCIADGSKLVDKLGKFPLPVEVIPMAQAVVARKLAALGGEPRLRVKDGKAVVTDNGCYIIDVLGLQIEDPATLEAQINDIVGVVTVGLFARRGADIALLGTADGVNSLSF</sequence>
<reference key="1">
    <citation type="journal article" date="2007" name="PLoS Genet.">
        <title>Genome analysis of Minibacterium massiliensis highlights the convergent evolution of water-living bacteria.</title>
        <authorList>
            <person name="Audic S."/>
            <person name="Robert C."/>
            <person name="Campagna B."/>
            <person name="Parinello H."/>
            <person name="Claverie J.-M."/>
            <person name="Raoult D."/>
            <person name="Drancourt M."/>
        </authorList>
    </citation>
    <scope>NUCLEOTIDE SEQUENCE [LARGE SCALE GENOMIC DNA]</scope>
    <source>
        <strain>Marseille</strain>
    </source>
</reference>
<keyword id="KW-0413">Isomerase</keyword>
<comment type="function">
    <text evidence="1">Catalyzes the reversible conversion of ribose-5-phosphate to ribulose 5-phosphate.</text>
</comment>
<comment type="catalytic activity">
    <reaction evidence="1">
        <text>aldehydo-D-ribose 5-phosphate = D-ribulose 5-phosphate</text>
        <dbReference type="Rhea" id="RHEA:14657"/>
        <dbReference type="ChEBI" id="CHEBI:58121"/>
        <dbReference type="ChEBI" id="CHEBI:58273"/>
        <dbReference type="EC" id="5.3.1.6"/>
    </reaction>
</comment>
<comment type="pathway">
    <text evidence="1">Carbohydrate degradation; pentose phosphate pathway; D-ribose 5-phosphate from D-ribulose 5-phosphate (non-oxidative stage): step 1/1.</text>
</comment>
<comment type="subunit">
    <text evidence="1">Homodimer.</text>
</comment>
<comment type="similarity">
    <text evidence="1">Belongs to the ribose 5-phosphate isomerase family.</text>
</comment>
<feature type="chain" id="PRO_1000016934" description="Ribose-5-phosphate isomerase A">
    <location>
        <begin position="1"/>
        <end position="223"/>
    </location>
</feature>
<feature type="active site" description="Proton acceptor" evidence="1">
    <location>
        <position position="103"/>
    </location>
</feature>
<feature type="binding site" evidence="1">
    <location>
        <begin position="28"/>
        <end position="31"/>
    </location>
    <ligand>
        <name>substrate</name>
    </ligand>
</feature>
<feature type="binding site" evidence="1">
    <location>
        <begin position="81"/>
        <end position="84"/>
    </location>
    <ligand>
        <name>substrate</name>
    </ligand>
</feature>
<feature type="binding site" evidence="1">
    <location>
        <begin position="94"/>
        <end position="97"/>
    </location>
    <ligand>
        <name>substrate</name>
    </ligand>
</feature>
<feature type="binding site" evidence="1">
    <location>
        <position position="121"/>
    </location>
    <ligand>
        <name>substrate</name>
    </ligand>
</feature>
<gene>
    <name evidence="1" type="primary">rpiA</name>
    <name type="ordered locus">mma_2308</name>
</gene>
<accession>A6T0F1</accession>
<proteinExistence type="inferred from homology"/>
<name>RPIA_JANMA</name>
<organism>
    <name type="scientific">Janthinobacterium sp. (strain Marseille)</name>
    <name type="common">Minibacterium massiliensis</name>
    <dbReference type="NCBI Taxonomy" id="375286"/>
    <lineage>
        <taxon>Bacteria</taxon>
        <taxon>Pseudomonadati</taxon>
        <taxon>Pseudomonadota</taxon>
        <taxon>Betaproteobacteria</taxon>
        <taxon>Burkholderiales</taxon>
        <taxon>Oxalobacteraceae</taxon>
        <taxon>Janthinobacterium</taxon>
    </lineage>
</organism>
<dbReference type="EC" id="5.3.1.6" evidence="1"/>
<dbReference type="EMBL" id="CP000269">
    <property type="protein sequence ID" value="ABR88484.1"/>
    <property type="molecule type" value="Genomic_DNA"/>
</dbReference>
<dbReference type="RefSeq" id="WP_012080161.1">
    <property type="nucleotide sequence ID" value="NC_009659.1"/>
</dbReference>
<dbReference type="SMR" id="A6T0F1"/>
<dbReference type="STRING" id="375286.mma_2308"/>
<dbReference type="KEGG" id="mms:mma_2308"/>
<dbReference type="eggNOG" id="COG0120">
    <property type="taxonomic scope" value="Bacteria"/>
</dbReference>
<dbReference type="HOGENOM" id="CLU_056590_1_1_4"/>
<dbReference type="OrthoDB" id="5870696at2"/>
<dbReference type="UniPathway" id="UPA00115">
    <property type="reaction ID" value="UER00412"/>
</dbReference>
<dbReference type="Proteomes" id="UP000006388">
    <property type="component" value="Chromosome"/>
</dbReference>
<dbReference type="GO" id="GO:0005829">
    <property type="term" value="C:cytosol"/>
    <property type="evidence" value="ECO:0007669"/>
    <property type="project" value="TreeGrafter"/>
</dbReference>
<dbReference type="GO" id="GO:0004751">
    <property type="term" value="F:ribose-5-phosphate isomerase activity"/>
    <property type="evidence" value="ECO:0007669"/>
    <property type="project" value="UniProtKB-UniRule"/>
</dbReference>
<dbReference type="GO" id="GO:0006014">
    <property type="term" value="P:D-ribose metabolic process"/>
    <property type="evidence" value="ECO:0007669"/>
    <property type="project" value="TreeGrafter"/>
</dbReference>
<dbReference type="GO" id="GO:0009052">
    <property type="term" value="P:pentose-phosphate shunt, non-oxidative branch"/>
    <property type="evidence" value="ECO:0007669"/>
    <property type="project" value="UniProtKB-UniRule"/>
</dbReference>
<dbReference type="CDD" id="cd01398">
    <property type="entry name" value="RPI_A"/>
    <property type="match status" value="1"/>
</dbReference>
<dbReference type="FunFam" id="3.40.50.1360:FF:000001">
    <property type="entry name" value="Ribose-5-phosphate isomerase A"/>
    <property type="match status" value="1"/>
</dbReference>
<dbReference type="Gene3D" id="3.30.70.260">
    <property type="match status" value="1"/>
</dbReference>
<dbReference type="Gene3D" id="3.40.50.1360">
    <property type="match status" value="1"/>
</dbReference>
<dbReference type="HAMAP" id="MF_00170">
    <property type="entry name" value="Rib_5P_isom_A"/>
    <property type="match status" value="1"/>
</dbReference>
<dbReference type="InterPro" id="IPR037171">
    <property type="entry name" value="NagB/RpiA_transferase-like"/>
</dbReference>
<dbReference type="InterPro" id="IPR020672">
    <property type="entry name" value="Ribose5P_isomerase_typA_subgr"/>
</dbReference>
<dbReference type="InterPro" id="IPR004788">
    <property type="entry name" value="Ribose5P_isomerase_type_A"/>
</dbReference>
<dbReference type="NCBIfam" id="NF001924">
    <property type="entry name" value="PRK00702.1"/>
    <property type="match status" value="1"/>
</dbReference>
<dbReference type="NCBIfam" id="TIGR00021">
    <property type="entry name" value="rpiA"/>
    <property type="match status" value="1"/>
</dbReference>
<dbReference type="PANTHER" id="PTHR11934">
    <property type="entry name" value="RIBOSE-5-PHOSPHATE ISOMERASE"/>
    <property type="match status" value="1"/>
</dbReference>
<dbReference type="PANTHER" id="PTHR11934:SF0">
    <property type="entry name" value="RIBOSE-5-PHOSPHATE ISOMERASE"/>
    <property type="match status" value="1"/>
</dbReference>
<dbReference type="Pfam" id="PF06026">
    <property type="entry name" value="Rib_5-P_isom_A"/>
    <property type="match status" value="1"/>
</dbReference>
<dbReference type="SUPFAM" id="SSF75445">
    <property type="entry name" value="D-ribose-5-phosphate isomerase (RpiA), lid domain"/>
    <property type="match status" value="1"/>
</dbReference>
<dbReference type="SUPFAM" id="SSF100950">
    <property type="entry name" value="NagB/RpiA/CoA transferase-like"/>
    <property type="match status" value="1"/>
</dbReference>